<protein>
    <recommendedName>
        <fullName evidence="1">Tryptophan synthase alpha chain</fullName>
        <ecNumber evidence="1">4.2.1.20</ecNumber>
    </recommendedName>
</protein>
<proteinExistence type="inferred from homology"/>
<accession>C5D3D3</accession>
<reference key="1">
    <citation type="submission" date="2009-06" db="EMBL/GenBank/DDBJ databases">
        <title>Complete sequence of chromosome of Geopacillus sp. WCH70.</title>
        <authorList>
            <consortium name="US DOE Joint Genome Institute"/>
            <person name="Lucas S."/>
            <person name="Copeland A."/>
            <person name="Lapidus A."/>
            <person name="Glavina del Rio T."/>
            <person name="Dalin E."/>
            <person name="Tice H."/>
            <person name="Bruce D."/>
            <person name="Goodwin L."/>
            <person name="Pitluck S."/>
            <person name="Chertkov O."/>
            <person name="Brettin T."/>
            <person name="Detter J.C."/>
            <person name="Han C."/>
            <person name="Larimer F."/>
            <person name="Land M."/>
            <person name="Hauser L."/>
            <person name="Kyrpides N."/>
            <person name="Mikhailova N."/>
            <person name="Brumm P."/>
            <person name="Mead D.A."/>
            <person name="Richardson P."/>
        </authorList>
    </citation>
    <scope>NUCLEOTIDE SEQUENCE [LARGE SCALE GENOMIC DNA]</scope>
    <source>
        <strain>WCH70</strain>
    </source>
</reference>
<feature type="chain" id="PRO_1000203184" description="Tryptophan synthase alpha chain">
    <location>
        <begin position="1"/>
        <end position="263"/>
    </location>
</feature>
<feature type="active site" description="Proton acceptor" evidence="1">
    <location>
        <position position="41"/>
    </location>
</feature>
<feature type="active site" description="Proton acceptor" evidence="1">
    <location>
        <position position="52"/>
    </location>
</feature>
<keyword id="KW-0028">Amino-acid biosynthesis</keyword>
<keyword id="KW-0057">Aromatic amino acid biosynthesis</keyword>
<keyword id="KW-0456">Lyase</keyword>
<keyword id="KW-0822">Tryptophan biosynthesis</keyword>
<sequence>MQLLTVTKPMFIPFIVAGDPRPDITIELALTLQEAGADILELGVPYSDPLADGPIIQRAAKRALRQQMTLKKAIELVPEMRKKGVKIPIILFTYYNPVLQLGEESFFALARKNEVNGILIPDLPFEESELIRKLGEATGIPLISLVAPTSKKRIEMIASNAQGFLYCVSSLGVTGVRDTLPETLNDFLTEVKRHSRVPVVVGFGISTSEQVSMLKNYCDGVVIGSALVQKIEQLNDLLQTEEKKEEALAEFRRYARSLTAPLR</sequence>
<evidence type="ECO:0000255" key="1">
    <source>
        <dbReference type="HAMAP-Rule" id="MF_00131"/>
    </source>
</evidence>
<gene>
    <name evidence="1" type="primary">trpA</name>
    <name type="ordered locus">GWCH70_2138</name>
</gene>
<organism>
    <name type="scientific">Geobacillus sp. (strain WCH70)</name>
    <dbReference type="NCBI Taxonomy" id="471223"/>
    <lineage>
        <taxon>Bacteria</taxon>
        <taxon>Bacillati</taxon>
        <taxon>Bacillota</taxon>
        <taxon>Bacilli</taxon>
        <taxon>Bacillales</taxon>
        <taxon>Anoxybacillaceae</taxon>
        <taxon>Geobacillus</taxon>
    </lineage>
</organism>
<dbReference type="EC" id="4.2.1.20" evidence="1"/>
<dbReference type="EMBL" id="CP001638">
    <property type="protein sequence ID" value="ACS24848.1"/>
    <property type="molecule type" value="Genomic_DNA"/>
</dbReference>
<dbReference type="SMR" id="C5D3D3"/>
<dbReference type="STRING" id="471223.GWCH70_2138"/>
<dbReference type="KEGG" id="gwc:GWCH70_2138"/>
<dbReference type="eggNOG" id="COG0159">
    <property type="taxonomic scope" value="Bacteria"/>
</dbReference>
<dbReference type="HOGENOM" id="CLU_016734_0_0_9"/>
<dbReference type="UniPathway" id="UPA00035">
    <property type="reaction ID" value="UER00044"/>
</dbReference>
<dbReference type="GO" id="GO:0005829">
    <property type="term" value="C:cytosol"/>
    <property type="evidence" value="ECO:0007669"/>
    <property type="project" value="TreeGrafter"/>
</dbReference>
<dbReference type="GO" id="GO:0004834">
    <property type="term" value="F:tryptophan synthase activity"/>
    <property type="evidence" value="ECO:0007669"/>
    <property type="project" value="UniProtKB-UniRule"/>
</dbReference>
<dbReference type="CDD" id="cd04724">
    <property type="entry name" value="Tryptophan_synthase_alpha"/>
    <property type="match status" value="1"/>
</dbReference>
<dbReference type="FunFam" id="3.20.20.70:FF:000037">
    <property type="entry name" value="Tryptophan synthase alpha chain"/>
    <property type="match status" value="1"/>
</dbReference>
<dbReference type="Gene3D" id="3.20.20.70">
    <property type="entry name" value="Aldolase class I"/>
    <property type="match status" value="1"/>
</dbReference>
<dbReference type="HAMAP" id="MF_00131">
    <property type="entry name" value="Trp_synth_alpha"/>
    <property type="match status" value="1"/>
</dbReference>
<dbReference type="InterPro" id="IPR013785">
    <property type="entry name" value="Aldolase_TIM"/>
</dbReference>
<dbReference type="InterPro" id="IPR011060">
    <property type="entry name" value="RibuloseP-bd_barrel"/>
</dbReference>
<dbReference type="InterPro" id="IPR018204">
    <property type="entry name" value="Trp_synthase_alpha_AS"/>
</dbReference>
<dbReference type="InterPro" id="IPR002028">
    <property type="entry name" value="Trp_synthase_suA"/>
</dbReference>
<dbReference type="NCBIfam" id="TIGR00262">
    <property type="entry name" value="trpA"/>
    <property type="match status" value="1"/>
</dbReference>
<dbReference type="PANTHER" id="PTHR43406:SF1">
    <property type="entry name" value="TRYPTOPHAN SYNTHASE ALPHA CHAIN, CHLOROPLASTIC"/>
    <property type="match status" value="1"/>
</dbReference>
<dbReference type="PANTHER" id="PTHR43406">
    <property type="entry name" value="TRYPTOPHAN SYNTHASE, ALPHA CHAIN"/>
    <property type="match status" value="1"/>
</dbReference>
<dbReference type="Pfam" id="PF00290">
    <property type="entry name" value="Trp_syntA"/>
    <property type="match status" value="1"/>
</dbReference>
<dbReference type="SUPFAM" id="SSF51366">
    <property type="entry name" value="Ribulose-phoshate binding barrel"/>
    <property type="match status" value="1"/>
</dbReference>
<dbReference type="PROSITE" id="PS00167">
    <property type="entry name" value="TRP_SYNTHASE_ALPHA"/>
    <property type="match status" value="1"/>
</dbReference>
<comment type="function">
    <text evidence="1">The alpha subunit is responsible for the aldol cleavage of indoleglycerol phosphate to indole and glyceraldehyde 3-phosphate.</text>
</comment>
<comment type="catalytic activity">
    <reaction evidence="1">
        <text>(1S,2R)-1-C-(indol-3-yl)glycerol 3-phosphate + L-serine = D-glyceraldehyde 3-phosphate + L-tryptophan + H2O</text>
        <dbReference type="Rhea" id="RHEA:10532"/>
        <dbReference type="ChEBI" id="CHEBI:15377"/>
        <dbReference type="ChEBI" id="CHEBI:33384"/>
        <dbReference type="ChEBI" id="CHEBI:57912"/>
        <dbReference type="ChEBI" id="CHEBI:58866"/>
        <dbReference type="ChEBI" id="CHEBI:59776"/>
        <dbReference type="EC" id="4.2.1.20"/>
    </reaction>
</comment>
<comment type="pathway">
    <text evidence="1">Amino-acid biosynthesis; L-tryptophan biosynthesis; L-tryptophan from chorismate: step 5/5.</text>
</comment>
<comment type="subunit">
    <text evidence="1">Tetramer of two alpha and two beta chains.</text>
</comment>
<comment type="similarity">
    <text evidence="1">Belongs to the TrpA family.</text>
</comment>
<name>TRPA_GEOSW</name>